<reference key="1">
    <citation type="journal article" date="2001" name="J. Bacteriol.">
        <title>Genome of the bacterium Streptococcus pneumoniae strain R6.</title>
        <authorList>
            <person name="Hoskins J."/>
            <person name="Alborn W.E. Jr."/>
            <person name="Arnold J."/>
            <person name="Blaszczak L.C."/>
            <person name="Burgett S."/>
            <person name="DeHoff B.S."/>
            <person name="Estrem S.T."/>
            <person name="Fritz L."/>
            <person name="Fu D.-J."/>
            <person name="Fuller W."/>
            <person name="Geringer C."/>
            <person name="Gilmour R."/>
            <person name="Glass J.S."/>
            <person name="Khoja H."/>
            <person name="Kraft A.R."/>
            <person name="Lagace R.E."/>
            <person name="LeBlanc D.J."/>
            <person name="Lee L.N."/>
            <person name="Lefkowitz E.J."/>
            <person name="Lu J."/>
            <person name="Matsushima P."/>
            <person name="McAhren S.M."/>
            <person name="McHenney M."/>
            <person name="McLeaster K."/>
            <person name="Mundy C.W."/>
            <person name="Nicas T.I."/>
            <person name="Norris F.H."/>
            <person name="O'Gara M."/>
            <person name="Peery R.B."/>
            <person name="Robertson G.T."/>
            <person name="Rockey P."/>
            <person name="Sun P.-M."/>
            <person name="Winkler M.E."/>
            <person name="Yang Y."/>
            <person name="Young-Bellido M."/>
            <person name="Zhao G."/>
            <person name="Zook C.A."/>
            <person name="Baltz R.H."/>
            <person name="Jaskunas S.R."/>
            <person name="Rosteck P.R. Jr."/>
            <person name="Skatrud P.L."/>
            <person name="Glass J.I."/>
        </authorList>
    </citation>
    <scope>NUCLEOTIDE SEQUENCE [LARGE SCALE GENOMIC DNA]</scope>
    <source>
        <strain>ATCC BAA-255 / R6</strain>
    </source>
</reference>
<dbReference type="EMBL" id="AE007317">
    <property type="protein sequence ID" value="AAK99975.1"/>
    <property type="molecule type" value="Genomic_DNA"/>
</dbReference>
<dbReference type="PIR" id="C98018">
    <property type="entry name" value="C98018"/>
</dbReference>
<dbReference type="RefSeq" id="NP_358765.1">
    <property type="nucleotide sequence ID" value="NC_003098.1"/>
</dbReference>
<dbReference type="SMR" id="Q8DPG7"/>
<dbReference type="STRING" id="171101.spr1172"/>
<dbReference type="KEGG" id="spr:spr1172"/>
<dbReference type="PATRIC" id="fig|171101.6.peg.1270"/>
<dbReference type="eggNOG" id="COG0239">
    <property type="taxonomic scope" value="Bacteria"/>
</dbReference>
<dbReference type="HOGENOM" id="CLU_114342_2_3_9"/>
<dbReference type="Proteomes" id="UP000000586">
    <property type="component" value="Chromosome"/>
</dbReference>
<dbReference type="GO" id="GO:0005886">
    <property type="term" value="C:plasma membrane"/>
    <property type="evidence" value="ECO:0007669"/>
    <property type="project" value="UniProtKB-SubCell"/>
</dbReference>
<dbReference type="GO" id="GO:0062054">
    <property type="term" value="F:fluoride channel activity"/>
    <property type="evidence" value="ECO:0007669"/>
    <property type="project" value="UniProtKB-UniRule"/>
</dbReference>
<dbReference type="GO" id="GO:0046872">
    <property type="term" value="F:metal ion binding"/>
    <property type="evidence" value="ECO:0007669"/>
    <property type="project" value="UniProtKB-KW"/>
</dbReference>
<dbReference type="GO" id="GO:0140114">
    <property type="term" value="P:cellular detoxification of fluoride"/>
    <property type="evidence" value="ECO:0007669"/>
    <property type="project" value="UniProtKB-UniRule"/>
</dbReference>
<dbReference type="HAMAP" id="MF_00454">
    <property type="entry name" value="FluC"/>
    <property type="match status" value="1"/>
</dbReference>
<dbReference type="InterPro" id="IPR003691">
    <property type="entry name" value="FluC"/>
</dbReference>
<dbReference type="NCBIfam" id="NF010825">
    <property type="entry name" value="PRK14229.1"/>
    <property type="match status" value="1"/>
</dbReference>
<dbReference type="PANTHER" id="PTHR28259">
    <property type="entry name" value="FLUORIDE EXPORT PROTEIN 1-RELATED"/>
    <property type="match status" value="1"/>
</dbReference>
<dbReference type="PANTHER" id="PTHR28259:SF1">
    <property type="entry name" value="FLUORIDE EXPORT PROTEIN 1-RELATED"/>
    <property type="match status" value="1"/>
</dbReference>
<dbReference type="Pfam" id="PF02537">
    <property type="entry name" value="CRCB"/>
    <property type="match status" value="1"/>
</dbReference>
<name>FLUC1_STRR6</name>
<proteinExistence type="inferred from homology"/>
<organism>
    <name type="scientific">Streptococcus pneumoniae (strain ATCC BAA-255 / R6)</name>
    <dbReference type="NCBI Taxonomy" id="171101"/>
    <lineage>
        <taxon>Bacteria</taxon>
        <taxon>Bacillati</taxon>
        <taxon>Bacillota</taxon>
        <taxon>Bacilli</taxon>
        <taxon>Lactobacillales</taxon>
        <taxon>Streptococcaceae</taxon>
        <taxon>Streptococcus</taxon>
    </lineage>
</organism>
<protein>
    <recommendedName>
        <fullName evidence="1">Fluoride-specific ion channel FluC 1</fullName>
    </recommendedName>
</protein>
<feature type="chain" id="PRO_0000110196" description="Fluoride-specific ion channel FluC 1">
    <location>
        <begin position="1"/>
        <end position="109"/>
    </location>
</feature>
<feature type="transmembrane region" description="Helical" evidence="1">
    <location>
        <begin position="1"/>
        <end position="21"/>
    </location>
</feature>
<feature type="transmembrane region" description="Helical" evidence="1">
    <location>
        <begin position="29"/>
        <end position="49"/>
    </location>
</feature>
<feature type="transmembrane region" description="Helical" evidence="1">
    <location>
        <begin position="55"/>
        <end position="75"/>
    </location>
</feature>
<feature type="transmembrane region" description="Helical" evidence="1">
    <location>
        <begin position="87"/>
        <end position="107"/>
    </location>
</feature>
<feature type="binding site" evidence="1">
    <location>
        <position position="66"/>
    </location>
    <ligand>
        <name>Na(+)</name>
        <dbReference type="ChEBI" id="CHEBI:29101"/>
        <note>structural</note>
    </ligand>
</feature>
<feature type="binding site" evidence="1">
    <location>
        <position position="69"/>
    </location>
    <ligand>
        <name>Na(+)</name>
        <dbReference type="ChEBI" id="CHEBI:29101"/>
        <note>structural</note>
    </ligand>
</feature>
<comment type="function">
    <text evidence="1">Fluoride-specific ion channel. Important for reducing fluoride concentration in the cell, thus reducing its toxicity.</text>
</comment>
<comment type="catalytic activity">
    <reaction evidence="1">
        <text>fluoride(in) = fluoride(out)</text>
        <dbReference type="Rhea" id="RHEA:76159"/>
        <dbReference type="ChEBI" id="CHEBI:17051"/>
    </reaction>
    <physiologicalReaction direction="left-to-right" evidence="1">
        <dbReference type="Rhea" id="RHEA:76160"/>
    </physiologicalReaction>
</comment>
<comment type="activity regulation">
    <text evidence="1">Na(+) is not transported, but it plays an essential structural role and its presence is essential for fluoride channel function.</text>
</comment>
<comment type="subcellular location">
    <subcellularLocation>
        <location evidence="1">Cell membrane</location>
        <topology evidence="1">Multi-pass membrane protein</topology>
    </subcellularLocation>
</comment>
<comment type="similarity">
    <text evidence="1">Belongs to the fluoride channel Fluc/FEX (TC 1.A.43) family.</text>
</comment>
<evidence type="ECO:0000255" key="1">
    <source>
        <dbReference type="HAMAP-Rule" id="MF_00454"/>
    </source>
</evidence>
<keyword id="KW-1003">Cell membrane</keyword>
<keyword id="KW-0407">Ion channel</keyword>
<keyword id="KW-0406">Ion transport</keyword>
<keyword id="KW-0472">Membrane</keyword>
<keyword id="KW-0479">Metal-binding</keyword>
<keyword id="KW-1185">Reference proteome</keyword>
<keyword id="KW-0915">Sodium</keyword>
<keyword id="KW-0812">Transmembrane</keyword>
<keyword id="KW-1133">Transmembrane helix</keyword>
<keyword id="KW-0813">Transport</keyword>
<gene>
    <name evidence="1" type="primary">fluC1</name>
    <name evidence="1" type="synonym">crcB1</name>
    <name type="ordered locus">spr1172</name>
</gene>
<accession>Q8DPG7</accession>
<sequence length="109" mass="12034">MVIVYLAIACGFGALVRYFFSRYNQASKLPLGTLIANLLGCFLIGVFYNHVESKEVYAILATGFCGGLTTFSTLNDELQRLLSDKKVFYSYLILTYLGGLVAIFLGILL</sequence>